<evidence type="ECO:0000255" key="1">
    <source>
        <dbReference type="HAMAP-Rule" id="MF_00176"/>
    </source>
</evidence>
<comment type="function">
    <text evidence="1">Catalyzes the attachment of serine to tRNA(Ser). Is also able to aminoacylate tRNA(Sec) with serine, to form the misacylated tRNA L-seryl-tRNA(Sec), which will be further converted into selenocysteinyl-tRNA(Sec).</text>
</comment>
<comment type="catalytic activity">
    <reaction evidence="1">
        <text>tRNA(Ser) + L-serine + ATP = L-seryl-tRNA(Ser) + AMP + diphosphate + H(+)</text>
        <dbReference type="Rhea" id="RHEA:12292"/>
        <dbReference type="Rhea" id="RHEA-COMP:9669"/>
        <dbReference type="Rhea" id="RHEA-COMP:9703"/>
        <dbReference type="ChEBI" id="CHEBI:15378"/>
        <dbReference type="ChEBI" id="CHEBI:30616"/>
        <dbReference type="ChEBI" id="CHEBI:33019"/>
        <dbReference type="ChEBI" id="CHEBI:33384"/>
        <dbReference type="ChEBI" id="CHEBI:78442"/>
        <dbReference type="ChEBI" id="CHEBI:78533"/>
        <dbReference type="ChEBI" id="CHEBI:456215"/>
        <dbReference type="EC" id="6.1.1.11"/>
    </reaction>
</comment>
<comment type="catalytic activity">
    <reaction evidence="1">
        <text>tRNA(Sec) + L-serine + ATP = L-seryl-tRNA(Sec) + AMP + diphosphate + H(+)</text>
        <dbReference type="Rhea" id="RHEA:42580"/>
        <dbReference type="Rhea" id="RHEA-COMP:9742"/>
        <dbReference type="Rhea" id="RHEA-COMP:10128"/>
        <dbReference type="ChEBI" id="CHEBI:15378"/>
        <dbReference type="ChEBI" id="CHEBI:30616"/>
        <dbReference type="ChEBI" id="CHEBI:33019"/>
        <dbReference type="ChEBI" id="CHEBI:33384"/>
        <dbReference type="ChEBI" id="CHEBI:78442"/>
        <dbReference type="ChEBI" id="CHEBI:78533"/>
        <dbReference type="ChEBI" id="CHEBI:456215"/>
        <dbReference type="EC" id="6.1.1.11"/>
    </reaction>
</comment>
<comment type="pathway">
    <text evidence="1">Aminoacyl-tRNA biosynthesis; selenocysteinyl-tRNA(Sec) biosynthesis; L-seryl-tRNA(Sec) from L-serine and tRNA(Sec): step 1/1.</text>
</comment>
<comment type="subunit">
    <text evidence="1">Homodimer. The tRNA molecule binds across the dimer.</text>
</comment>
<comment type="subcellular location">
    <subcellularLocation>
        <location evidence="1">Cytoplasm</location>
    </subcellularLocation>
</comment>
<comment type="domain">
    <text evidence="1">Consists of two distinct domains, a catalytic core and a N-terminal extension that is involved in tRNA binding.</text>
</comment>
<comment type="similarity">
    <text evidence="1">Belongs to the class-II aminoacyl-tRNA synthetase family. Type-1 seryl-tRNA synthetase subfamily.</text>
</comment>
<feature type="chain" id="PRO_1000019720" description="Serine--tRNA ligase">
    <location>
        <begin position="1"/>
        <end position="427"/>
    </location>
</feature>
<feature type="binding site" evidence="1">
    <location>
        <begin position="231"/>
        <end position="233"/>
    </location>
    <ligand>
        <name>L-serine</name>
        <dbReference type="ChEBI" id="CHEBI:33384"/>
    </ligand>
</feature>
<feature type="binding site" evidence="1">
    <location>
        <begin position="262"/>
        <end position="264"/>
    </location>
    <ligand>
        <name>ATP</name>
        <dbReference type="ChEBI" id="CHEBI:30616"/>
    </ligand>
</feature>
<feature type="binding site" evidence="1">
    <location>
        <position position="285"/>
    </location>
    <ligand>
        <name>L-serine</name>
        <dbReference type="ChEBI" id="CHEBI:33384"/>
    </ligand>
</feature>
<feature type="binding site" evidence="1">
    <location>
        <begin position="349"/>
        <end position="352"/>
    </location>
    <ligand>
        <name>ATP</name>
        <dbReference type="ChEBI" id="CHEBI:30616"/>
    </ligand>
</feature>
<feature type="binding site" evidence="1">
    <location>
        <position position="385"/>
    </location>
    <ligand>
        <name>L-serine</name>
        <dbReference type="ChEBI" id="CHEBI:33384"/>
    </ligand>
</feature>
<keyword id="KW-0030">Aminoacyl-tRNA synthetase</keyword>
<keyword id="KW-0067">ATP-binding</keyword>
<keyword id="KW-0963">Cytoplasm</keyword>
<keyword id="KW-0436">Ligase</keyword>
<keyword id="KW-0547">Nucleotide-binding</keyword>
<keyword id="KW-0648">Protein biosynthesis</keyword>
<proteinExistence type="inferred from homology"/>
<reference key="1">
    <citation type="journal article" date="2006" name="J. Bacteriol.">
        <title>Whole-genome sequence of Listeria welshimeri reveals common steps in genome reduction with Listeria innocua as compared to Listeria monocytogenes.</title>
        <authorList>
            <person name="Hain T."/>
            <person name="Steinweg C."/>
            <person name="Kuenne C.T."/>
            <person name="Billion A."/>
            <person name="Ghai R."/>
            <person name="Chatterjee S.S."/>
            <person name="Domann E."/>
            <person name="Kaerst U."/>
            <person name="Goesmann A."/>
            <person name="Bekel T."/>
            <person name="Bartels D."/>
            <person name="Kaiser O."/>
            <person name="Meyer F."/>
            <person name="Puehler A."/>
            <person name="Weisshaar B."/>
            <person name="Wehland J."/>
            <person name="Liang C."/>
            <person name="Dandekar T."/>
            <person name="Lampidis R."/>
            <person name="Kreft J."/>
            <person name="Goebel W."/>
            <person name="Chakraborty T."/>
        </authorList>
    </citation>
    <scope>NUCLEOTIDE SEQUENCE [LARGE SCALE GENOMIC DNA]</scope>
    <source>
        <strain>ATCC 35897 / DSM 20650 / CCUG 15529 / CIP 8149 / NCTC 11857 / SLCC 5334 / V8</strain>
    </source>
</reference>
<dbReference type="EC" id="6.1.1.11" evidence="1"/>
<dbReference type="EMBL" id="AM263198">
    <property type="protein sequence ID" value="CAK22113.1"/>
    <property type="molecule type" value="Genomic_DNA"/>
</dbReference>
<dbReference type="RefSeq" id="WP_011703385.1">
    <property type="nucleotide sequence ID" value="NC_008555.1"/>
</dbReference>
<dbReference type="SMR" id="A0AM81"/>
<dbReference type="STRING" id="386043.lwe2695"/>
<dbReference type="GeneID" id="61190618"/>
<dbReference type="KEGG" id="lwe:lwe2695"/>
<dbReference type="eggNOG" id="COG0172">
    <property type="taxonomic scope" value="Bacteria"/>
</dbReference>
<dbReference type="HOGENOM" id="CLU_023797_1_1_9"/>
<dbReference type="OrthoDB" id="9804647at2"/>
<dbReference type="UniPathway" id="UPA00906">
    <property type="reaction ID" value="UER00895"/>
</dbReference>
<dbReference type="Proteomes" id="UP000000779">
    <property type="component" value="Chromosome"/>
</dbReference>
<dbReference type="GO" id="GO:0005737">
    <property type="term" value="C:cytoplasm"/>
    <property type="evidence" value="ECO:0007669"/>
    <property type="project" value="UniProtKB-SubCell"/>
</dbReference>
<dbReference type="GO" id="GO:0005524">
    <property type="term" value="F:ATP binding"/>
    <property type="evidence" value="ECO:0007669"/>
    <property type="project" value="UniProtKB-UniRule"/>
</dbReference>
<dbReference type="GO" id="GO:0140096">
    <property type="term" value="F:catalytic activity, acting on a protein"/>
    <property type="evidence" value="ECO:0007669"/>
    <property type="project" value="UniProtKB-ARBA"/>
</dbReference>
<dbReference type="GO" id="GO:0004828">
    <property type="term" value="F:serine-tRNA ligase activity"/>
    <property type="evidence" value="ECO:0007669"/>
    <property type="project" value="UniProtKB-UniRule"/>
</dbReference>
<dbReference type="GO" id="GO:0016740">
    <property type="term" value="F:transferase activity"/>
    <property type="evidence" value="ECO:0007669"/>
    <property type="project" value="UniProtKB-ARBA"/>
</dbReference>
<dbReference type="GO" id="GO:0016260">
    <property type="term" value="P:selenocysteine biosynthetic process"/>
    <property type="evidence" value="ECO:0007669"/>
    <property type="project" value="UniProtKB-UniRule"/>
</dbReference>
<dbReference type="GO" id="GO:0006434">
    <property type="term" value="P:seryl-tRNA aminoacylation"/>
    <property type="evidence" value="ECO:0007669"/>
    <property type="project" value="UniProtKB-UniRule"/>
</dbReference>
<dbReference type="CDD" id="cd00770">
    <property type="entry name" value="SerRS_core"/>
    <property type="match status" value="1"/>
</dbReference>
<dbReference type="Gene3D" id="3.30.930.10">
    <property type="entry name" value="Bira Bifunctional Protein, Domain 2"/>
    <property type="match status" value="1"/>
</dbReference>
<dbReference type="Gene3D" id="1.10.287.40">
    <property type="entry name" value="Serine-tRNA synthetase, tRNA binding domain"/>
    <property type="match status" value="1"/>
</dbReference>
<dbReference type="HAMAP" id="MF_00176">
    <property type="entry name" value="Ser_tRNA_synth_type1"/>
    <property type="match status" value="1"/>
</dbReference>
<dbReference type="InterPro" id="IPR002314">
    <property type="entry name" value="aa-tRNA-synt_IIb"/>
</dbReference>
<dbReference type="InterPro" id="IPR006195">
    <property type="entry name" value="aa-tRNA-synth_II"/>
</dbReference>
<dbReference type="InterPro" id="IPR045864">
    <property type="entry name" value="aa-tRNA-synth_II/BPL/LPL"/>
</dbReference>
<dbReference type="InterPro" id="IPR002317">
    <property type="entry name" value="Ser-tRNA-ligase_type_1"/>
</dbReference>
<dbReference type="InterPro" id="IPR015866">
    <property type="entry name" value="Ser-tRNA-synth_1_N"/>
</dbReference>
<dbReference type="InterPro" id="IPR042103">
    <property type="entry name" value="SerRS_1_N_sf"/>
</dbReference>
<dbReference type="InterPro" id="IPR033729">
    <property type="entry name" value="SerRS_core"/>
</dbReference>
<dbReference type="InterPro" id="IPR010978">
    <property type="entry name" value="tRNA-bd_arm"/>
</dbReference>
<dbReference type="NCBIfam" id="TIGR00414">
    <property type="entry name" value="serS"/>
    <property type="match status" value="1"/>
</dbReference>
<dbReference type="PANTHER" id="PTHR43697:SF1">
    <property type="entry name" value="SERINE--TRNA LIGASE"/>
    <property type="match status" value="1"/>
</dbReference>
<dbReference type="PANTHER" id="PTHR43697">
    <property type="entry name" value="SERYL-TRNA SYNTHETASE"/>
    <property type="match status" value="1"/>
</dbReference>
<dbReference type="Pfam" id="PF02403">
    <property type="entry name" value="Seryl_tRNA_N"/>
    <property type="match status" value="1"/>
</dbReference>
<dbReference type="Pfam" id="PF00587">
    <property type="entry name" value="tRNA-synt_2b"/>
    <property type="match status" value="1"/>
</dbReference>
<dbReference type="PIRSF" id="PIRSF001529">
    <property type="entry name" value="Ser-tRNA-synth_IIa"/>
    <property type="match status" value="1"/>
</dbReference>
<dbReference type="PRINTS" id="PR00981">
    <property type="entry name" value="TRNASYNTHSER"/>
</dbReference>
<dbReference type="SUPFAM" id="SSF55681">
    <property type="entry name" value="Class II aaRS and biotin synthetases"/>
    <property type="match status" value="1"/>
</dbReference>
<dbReference type="SUPFAM" id="SSF46589">
    <property type="entry name" value="tRNA-binding arm"/>
    <property type="match status" value="1"/>
</dbReference>
<dbReference type="PROSITE" id="PS50862">
    <property type="entry name" value="AA_TRNA_LIGASE_II"/>
    <property type="match status" value="1"/>
</dbReference>
<accession>A0AM81</accession>
<gene>
    <name evidence="1" type="primary">serS</name>
    <name type="ordered locus">lwe2695</name>
</gene>
<name>SYS_LISW6</name>
<sequence length="427" mass="49183">MLDVKLLRNNFEEVKQKLQNRGEDLGEFEKFGELDKRRRTLIVETEALKSQRNEVSQEIAKLKREKQDADAKIEEMRVVGDRIKTLDIELREIDEKLDMILMSIPNIPHESTPVGESEDDNVEIRKWGEVRTFDFEPKAHWDLGTDLDILDFENAAKVTGSRFVFYKKLGARLERALINFMMDLHSNEHGYEEMLPPYMVNRASMTGTGQLPKFEEDAFLIEAEDYFLIPTAEVPVTNYHREDILKAEDLPRKYTAFSACFRSEAGSAGRDTRGLIRQHQFNKVELVQFVKPEDSYEALEKLTSNAEEVLRRLELPYRVLSMCTADLGFTAAKKYDLEVWIPSYDSYREISSCSNFESFQARRANIRFRREPGSKPEYVHTLNGSGLALGRTVAAILENYQDADGSVRIPKVLQGYMGGIEKIELPK</sequence>
<organism>
    <name type="scientific">Listeria welshimeri serovar 6b (strain ATCC 35897 / DSM 20650 / CCUG 15529 / CIP 8149 / NCTC 11857 / SLCC 5334 / V8)</name>
    <dbReference type="NCBI Taxonomy" id="386043"/>
    <lineage>
        <taxon>Bacteria</taxon>
        <taxon>Bacillati</taxon>
        <taxon>Bacillota</taxon>
        <taxon>Bacilli</taxon>
        <taxon>Bacillales</taxon>
        <taxon>Listeriaceae</taxon>
        <taxon>Listeria</taxon>
    </lineage>
</organism>
<protein>
    <recommendedName>
        <fullName evidence="1">Serine--tRNA ligase</fullName>
        <ecNumber evidence="1">6.1.1.11</ecNumber>
    </recommendedName>
    <alternativeName>
        <fullName evidence="1">Seryl-tRNA synthetase</fullName>
        <shortName evidence="1">SerRS</shortName>
    </alternativeName>
    <alternativeName>
        <fullName evidence="1">Seryl-tRNA(Ser/Sec) synthetase</fullName>
    </alternativeName>
</protein>